<proteinExistence type="evidence at protein level"/>
<sequence length="65" mass="7595">TRKQPNCNVYRSHLFFCTRQMDPICGTNGKSYANPCIFCSEKGLRNQKFDFGHWGHCREYTSARS</sequence>
<dbReference type="PIR" id="A01233">
    <property type="entry name" value="XTPG1"/>
</dbReference>
<dbReference type="SMR" id="P00999"/>
<dbReference type="FunCoup" id="P00999">
    <property type="interactions" value="3"/>
</dbReference>
<dbReference type="GlyGen" id="P00999">
    <property type="glycosylation" value="2 sites"/>
</dbReference>
<dbReference type="InParanoid" id="P00999"/>
<dbReference type="Proteomes" id="UP000008227">
    <property type="component" value="Unplaced"/>
</dbReference>
<dbReference type="Proteomes" id="UP000314985">
    <property type="component" value="Unplaced"/>
</dbReference>
<dbReference type="Proteomes" id="UP000694570">
    <property type="component" value="Unplaced"/>
</dbReference>
<dbReference type="Proteomes" id="UP000694571">
    <property type="component" value="Unplaced"/>
</dbReference>
<dbReference type="Proteomes" id="UP000694720">
    <property type="component" value="Unplaced"/>
</dbReference>
<dbReference type="Proteomes" id="UP000694722">
    <property type="component" value="Unplaced"/>
</dbReference>
<dbReference type="Proteomes" id="UP000694723">
    <property type="component" value="Unplaced"/>
</dbReference>
<dbReference type="Proteomes" id="UP000694724">
    <property type="component" value="Unplaced"/>
</dbReference>
<dbReference type="Proteomes" id="UP000694725">
    <property type="component" value="Unplaced"/>
</dbReference>
<dbReference type="Proteomes" id="UP000694726">
    <property type="component" value="Unplaced"/>
</dbReference>
<dbReference type="Proteomes" id="UP000694727">
    <property type="component" value="Unplaced"/>
</dbReference>
<dbReference type="Proteomes" id="UP000694728">
    <property type="component" value="Unplaced"/>
</dbReference>
<dbReference type="GO" id="GO:0005576">
    <property type="term" value="C:extracellular region"/>
    <property type="evidence" value="ECO:0007669"/>
    <property type="project" value="UniProtKB-SubCell"/>
</dbReference>
<dbReference type="GO" id="GO:0004867">
    <property type="term" value="F:serine-type endopeptidase inhibitor activity"/>
    <property type="evidence" value="ECO:0007669"/>
    <property type="project" value="UniProtKB-KW"/>
</dbReference>
<dbReference type="Gene3D" id="3.30.60.30">
    <property type="match status" value="1"/>
</dbReference>
<dbReference type="InterPro" id="IPR002350">
    <property type="entry name" value="Kazal_dom"/>
</dbReference>
<dbReference type="InterPro" id="IPR036058">
    <property type="entry name" value="Kazal_dom_sf"/>
</dbReference>
<dbReference type="PANTHER" id="PTHR21312">
    <property type="entry name" value="SERINE PROTEASE INHIBITOR"/>
    <property type="match status" value="1"/>
</dbReference>
<dbReference type="PANTHER" id="PTHR21312:SF30">
    <property type="entry name" value="SERINE PROTEASE INHIBITOR KAZAL-TYPE 11-RELATED"/>
    <property type="match status" value="1"/>
</dbReference>
<dbReference type="Pfam" id="PF00050">
    <property type="entry name" value="Kazal_1"/>
    <property type="match status" value="1"/>
</dbReference>
<dbReference type="SMART" id="SM00280">
    <property type="entry name" value="KAZAL"/>
    <property type="match status" value="1"/>
</dbReference>
<dbReference type="SUPFAM" id="SSF100895">
    <property type="entry name" value="Kazal-type serine protease inhibitors"/>
    <property type="match status" value="1"/>
</dbReference>
<dbReference type="PROSITE" id="PS00282">
    <property type="entry name" value="KAZAL_1"/>
    <property type="match status" value="1"/>
</dbReference>
<dbReference type="PROSITE" id="PS51465">
    <property type="entry name" value="KAZAL_2"/>
    <property type="match status" value="1"/>
</dbReference>
<accession>P00999</accession>
<comment type="function">
    <text>Inhibits acrosin.</text>
</comment>
<comment type="subcellular location">
    <subcellularLocation>
        <location>Secreted</location>
    </subcellularLocation>
</comment>
<comment type="tissue specificity">
    <text>Seminal plasma.</text>
</comment>
<comment type="PTM">
    <text evidence="2">The identity of the O-linked saccharides are not reported in Ref.1. The O-linked polysaccharides on Ser-12 and Ser-62 are probably the mucin type linked to GalNAc.</text>
</comment>
<reference key="1">
    <citation type="book" date="1976" name="Protides of the biological fluids, Proc. 23th colloquium">
        <editorList>
            <person name="Peeters H."/>
        </editorList>
        <authorList>
            <person name="Tschesche H."/>
            <person name="Kupfer S."/>
            <person name="Klauser R."/>
            <person name="Fink E."/>
            <person name="Fritz H."/>
        </authorList>
    </citation>
    <scope>PROTEIN SEQUENCE</scope>
    <scope>GLYCOSYLATION AT SER-12 AND SER-62</scope>
    <scope>DISULFIDE BONDS</scope>
</reference>
<feature type="chain" id="PRO_0000073034" description="Seminal plasma acrosin inhibitor A1">
    <location>
        <begin position="1"/>
        <end position="65"/>
    </location>
</feature>
<feature type="domain" description="Kazal-like" evidence="1">
    <location>
        <begin position="1"/>
        <end position="59"/>
    </location>
</feature>
<feature type="site" description="Reactive bond">
    <location>
        <begin position="19"/>
        <end position="20"/>
    </location>
</feature>
<feature type="glycosylation site" description="O-linked (GalNAc...) serine" evidence="2">
    <location>
        <position position="12"/>
    </location>
</feature>
<feature type="glycosylation site" description="O-linked (GalNAc...) serine" evidence="2">
    <location>
        <position position="62"/>
    </location>
</feature>
<feature type="disulfide bond" evidence="1 2">
    <location>
        <begin position="7"/>
        <end position="39"/>
    </location>
</feature>
<feature type="disulfide bond" evidence="1 2">
    <location>
        <begin position="17"/>
        <end position="36"/>
    </location>
</feature>
<feature type="disulfide bond" evidence="1 2">
    <location>
        <begin position="25"/>
        <end position="57"/>
    </location>
</feature>
<protein>
    <recommendedName>
        <fullName>Seminal plasma acrosin inhibitor A1</fullName>
    </recommendedName>
</protein>
<evidence type="ECO:0000255" key="1">
    <source>
        <dbReference type="PROSITE-ProRule" id="PRU00798"/>
    </source>
</evidence>
<evidence type="ECO:0000269" key="2">
    <source ref="1"/>
</evidence>
<name>IACA_PIG</name>
<organism>
    <name type="scientific">Sus scrofa</name>
    <name type="common">Pig</name>
    <dbReference type="NCBI Taxonomy" id="9823"/>
    <lineage>
        <taxon>Eukaryota</taxon>
        <taxon>Metazoa</taxon>
        <taxon>Chordata</taxon>
        <taxon>Craniata</taxon>
        <taxon>Vertebrata</taxon>
        <taxon>Euteleostomi</taxon>
        <taxon>Mammalia</taxon>
        <taxon>Eutheria</taxon>
        <taxon>Laurasiatheria</taxon>
        <taxon>Artiodactyla</taxon>
        <taxon>Suina</taxon>
        <taxon>Suidae</taxon>
        <taxon>Sus</taxon>
    </lineage>
</organism>
<keyword id="KW-0903">Direct protein sequencing</keyword>
<keyword id="KW-1015">Disulfide bond</keyword>
<keyword id="KW-0325">Glycoprotein</keyword>
<keyword id="KW-0646">Protease inhibitor</keyword>
<keyword id="KW-1185">Reference proteome</keyword>
<keyword id="KW-0964">Secreted</keyword>
<keyword id="KW-0722">Serine protease inhibitor</keyword>